<dbReference type="EC" id="2.5.1.78" evidence="1"/>
<dbReference type="EMBL" id="CP001013">
    <property type="protein sequence ID" value="ACB35201.1"/>
    <property type="molecule type" value="Genomic_DNA"/>
</dbReference>
<dbReference type="RefSeq" id="WP_012347955.1">
    <property type="nucleotide sequence ID" value="NC_010524.1"/>
</dbReference>
<dbReference type="SMR" id="B1XYF6"/>
<dbReference type="STRING" id="395495.Lcho_2936"/>
<dbReference type="KEGG" id="lch:Lcho_2936"/>
<dbReference type="eggNOG" id="COG0054">
    <property type="taxonomic scope" value="Bacteria"/>
</dbReference>
<dbReference type="HOGENOM" id="CLU_089358_1_2_4"/>
<dbReference type="OrthoDB" id="9809709at2"/>
<dbReference type="UniPathway" id="UPA00275">
    <property type="reaction ID" value="UER00404"/>
</dbReference>
<dbReference type="Proteomes" id="UP000001693">
    <property type="component" value="Chromosome"/>
</dbReference>
<dbReference type="GO" id="GO:0005829">
    <property type="term" value="C:cytosol"/>
    <property type="evidence" value="ECO:0007669"/>
    <property type="project" value="TreeGrafter"/>
</dbReference>
<dbReference type="GO" id="GO:0009349">
    <property type="term" value="C:riboflavin synthase complex"/>
    <property type="evidence" value="ECO:0007669"/>
    <property type="project" value="InterPro"/>
</dbReference>
<dbReference type="GO" id="GO:0000906">
    <property type="term" value="F:6,7-dimethyl-8-ribityllumazine synthase activity"/>
    <property type="evidence" value="ECO:0007669"/>
    <property type="project" value="UniProtKB-UniRule"/>
</dbReference>
<dbReference type="GO" id="GO:0009231">
    <property type="term" value="P:riboflavin biosynthetic process"/>
    <property type="evidence" value="ECO:0007669"/>
    <property type="project" value="UniProtKB-UniRule"/>
</dbReference>
<dbReference type="CDD" id="cd09209">
    <property type="entry name" value="Lumazine_synthase-I"/>
    <property type="match status" value="1"/>
</dbReference>
<dbReference type="Gene3D" id="3.40.50.960">
    <property type="entry name" value="Lumazine/riboflavin synthase"/>
    <property type="match status" value="1"/>
</dbReference>
<dbReference type="HAMAP" id="MF_00178">
    <property type="entry name" value="Lumazine_synth"/>
    <property type="match status" value="1"/>
</dbReference>
<dbReference type="InterPro" id="IPR034964">
    <property type="entry name" value="LS"/>
</dbReference>
<dbReference type="InterPro" id="IPR002180">
    <property type="entry name" value="LS/RS"/>
</dbReference>
<dbReference type="InterPro" id="IPR036467">
    <property type="entry name" value="LS/RS_sf"/>
</dbReference>
<dbReference type="NCBIfam" id="TIGR00114">
    <property type="entry name" value="lumazine-synth"/>
    <property type="match status" value="1"/>
</dbReference>
<dbReference type="PANTHER" id="PTHR21058:SF0">
    <property type="entry name" value="6,7-DIMETHYL-8-RIBITYLLUMAZINE SYNTHASE"/>
    <property type="match status" value="1"/>
</dbReference>
<dbReference type="PANTHER" id="PTHR21058">
    <property type="entry name" value="6,7-DIMETHYL-8-RIBITYLLUMAZINE SYNTHASE DMRL SYNTHASE LUMAZINE SYNTHASE"/>
    <property type="match status" value="1"/>
</dbReference>
<dbReference type="Pfam" id="PF00885">
    <property type="entry name" value="DMRL_synthase"/>
    <property type="match status" value="1"/>
</dbReference>
<dbReference type="SUPFAM" id="SSF52121">
    <property type="entry name" value="Lumazine synthase"/>
    <property type="match status" value="1"/>
</dbReference>
<keyword id="KW-1185">Reference proteome</keyword>
<keyword id="KW-0686">Riboflavin biosynthesis</keyword>
<keyword id="KW-0808">Transferase</keyword>
<gene>
    <name evidence="1" type="primary">ribH</name>
    <name type="ordered locus">Lcho_2936</name>
</gene>
<feature type="chain" id="PRO_1000195494" description="6,7-dimethyl-8-ribityllumazine synthase">
    <location>
        <begin position="1"/>
        <end position="154"/>
    </location>
</feature>
<feature type="active site" description="Proton donor" evidence="1">
    <location>
        <position position="92"/>
    </location>
</feature>
<feature type="binding site" evidence="1">
    <location>
        <position position="26"/>
    </location>
    <ligand>
        <name>5-amino-6-(D-ribitylamino)uracil</name>
        <dbReference type="ChEBI" id="CHEBI:15934"/>
    </ligand>
</feature>
<feature type="binding site" evidence="1">
    <location>
        <begin position="60"/>
        <end position="62"/>
    </location>
    <ligand>
        <name>5-amino-6-(D-ribitylamino)uracil</name>
        <dbReference type="ChEBI" id="CHEBI:15934"/>
    </ligand>
</feature>
<feature type="binding site" evidence="1">
    <location>
        <begin position="84"/>
        <end position="86"/>
    </location>
    <ligand>
        <name>5-amino-6-(D-ribitylamino)uracil</name>
        <dbReference type="ChEBI" id="CHEBI:15934"/>
    </ligand>
</feature>
<feature type="binding site" evidence="1">
    <location>
        <begin position="89"/>
        <end position="90"/>
    </location>
    <ligand>
        <name>(2S)-2-hydroxy-3-oxobutyl phosphate</name>
        <dbReference type="ChEBI" id="CHEBI:58830"/>
    </ligand>
</feature>
<feature type="binding site" evidence="1">
    <location>
        <position position="117"/>
    </location>
    <ligand>
        <name>5-amino-6-(D-ribitylamino)uracil</name>
        <dbReference type="ChEBI" id="CHEBI:15934"/>
    </ligand>
</feature>
<feature type="binding site" evidence="1">
    <location>
        <position position="131"/>
    </location>
    <ligand>
        <name>(2S)-2-hydroxy-3-oxobutyl phosphate</name>
        <dbReference type="ChEBI" id="CHEBI:58830"/>
    </ligand>
</feature>
<reference key="1">
    <citation type="submission" date="2008-03" db="EMBL/GenBank/DDBJ databases">
        <title>Complete sequence of Leptothrix cholodnii SP-6.</title>
        <authorList>
            <consortium name="US DOE Joint Genome Institute"/>
            <person name="Copeland A."/>
            <person name="Lucas S."/>
            <person name="Lapidus A."/>
            <person name="Glavina del Rio T."/>
            <person name="Dalin E."/>
            <person name="Tice H."/>
            <person name="Bruce D."/>
            <person name="Goodwin L."/>
            <person name="Pitluck S."/>
            <person name="Chertkov O."/>
            <person name="Brettin T."/>
            <person name="Detter J.C."/>
            <person name="Han C."/>
            <person name="Kuske C.R."/>
            <person name="Schmutz J."/>
            <person name="Larimer F."/>
            <person name="Land M."/>
            <person name="Hauser L."/>
            <person name="Kyrpides N."/>
            <person name="Lykidis A."/>
            <person name="Emerson D."/>
            <person name="Richardson P."/>
        </authorList>
    </citation>
    <scope>NUCLEOTIDE SEQUENCE [LARGE SCALE GENOMIC DNA]</scope>
    <source>
        <strain>ATCC 51168 / LMG 8142 / SP-6</strain>
    </source>
</reference>
<protein>
    <recommendedName>
        <fullName evidence="1">6,7-dimethyl-8-ribityllumazine synthase</fullName>
        <shortName evidence="1">DMRL synthase</shortName>
        <shortName evidence="1">LS</shortName>
        <shortName evidence="1">Lumazine synthase</shortName>
        <ecNumber evidence="1">2.5.1.78</ecNumber>
    </recommendedName>
</protein>
<organism>
    <name type="scientific">Leptothrix cholodnii (strain ATCC 51168 / LMG 8142 / SP-6)</name>
    <name type="common">Leptothrix discophora (strain SP-6)</name>
    <dbReference type="NCBI Taxonomy" id="395495"/>
    <lineage>
        <taxon>Bacteria</taxon>
        <taxon>Pseudomonadati</taxon>
        <taxon>Pseudomonadota</taxon>
        <taxon>Betaproteobacteria</taxon>
        <taxon>Burkholderiales</taxon>
        <taxon>Sphaerotilaceae</taxon>
        <taxon>Leptothrix</taxon>
    </lineage>
</organism>
<proteinExistence type="inferred from homology"/>
<name>RISB_LEPCP</name>
<comment type="function">
    <text evidence="1">Catalyzes the formation of 6,7-dimethyl-8-ribityllumazine by condensation of 5-amino-6-(D-ribitylamino)uracil with 3,4-dihydroxy-2-butanone 4-phosphate. This is the penultimate step in the biosynthesis of riboflavin.</text>
</comment>
<comment type="catalytic activity">
    <reaction evidence="1">
        <text>(2S)-2-hydroxy-3-oxobutyl phosphate + 5-amino-6-(D-ribitylamino)uracil = 6,7-dimethyl-8-(1-D-ribityl)lumazine + phosphate + 2 H2O + H(+)</text>
        <dbReference type="Rhea" id="RHEA:26152"/>
        <dbReference type="ChEBI" id="CHEBI:15377"/>
        <dbReference type="ChEBI" id="CHEBI:15378"/>
        <dbReference type="ChEBI" id="CHEBI:15934"/>
        <dbReference type="ChEBI" id="CHEBI:43474"/>
        <dbReference type="ChEBI" id="CHEBI:58201"/>
        <dbReference type="ChEBI" id="CHEBI:58830"/>
        <dbReference type="EC" id="2.5.1.78"/>
    </reaction>
</comment>
<comment type="pathway">
    <text evidence="1">Cofactor biosynthesis; riboflavin biosynthesis; riboflavin from 2-hydroxy-3-oxobutyl phosphate and 5-amino-6-(D-ribitylamino)uracil: step 1/2.</text>
</comment>
<comment type="similarity">
    <text evidence="1">Belongs to the DMRL synthase family.</text>
</comment>
<accession>B1XYF6</accession>
<evidence type="ECO:0000255" key="1">
    <source>
        <dbReference type="HAMAP-Rule" id="MF_00178"/>
    </source>
</evidence>
<sequence length="154" mass="16290">MKNADRGVAAELDGSDLRVAIVQARFNAAITEQLASSCIAELEALGVLAKHIKHVTVPGALEVALALQALAEQKDHDALIALGCIIRGETYHFELVANESGAAVTRVSLEHGVPIANAILTVENEAQAWARADEKGRDAARVAVEMANLMEDLS</sequence>